<accession>Q1CK20</accession>
<accession>C4GRT6</accession>
<feature type="chain" id="PRO_1000069090" description="UPF0370 protein YPN_1330">
    <location>
        <begin position="1"/>
        <end position="64"/>
    </location>
</feature>
<feature type="transmembrane region" description="Helical" evidence="1">
    <location>
        <begin position="3"/>
        <end position="23"/>
    </location>
</feature>
<feature type="region of interest" description="Disordered" evidence="2">
    <location>
        <begin position="36"/>
        <end position="64"/>
    </location>
</feature>
<feature type="compositionally biased region" description="Basic and acidic residues" evidence="2">
    <location>
        <begin position="36"/>
        <end position="47"/>
    </location>
</feature>
<proteinExistence type="inferred from homology"/>
<protein>
    <recommendedName>
        <fullName evidence="1">UPF0370 protein YPN_1330</fullName>
    </recommendedName>
</protein>
<comment type="subcellular location">
    <subcellularLocation>
        <location evidence="1">Cell membrane</location>
        <topology evidence="1">Single-pass membrane protein</topology>
    </subcellularLocation>
</comment>
<comment type="similarity">
    <text evidence="1">Belongs to the UPF0370 family.</text>
</comment>
<keyword id="KW-1003">Cell membrane</keyword>
<keyword id="KW-0472">Membrane</keyword>
<keyword id="KW-0812">Transmembrane</keyword>
<keyword id="KW-1133">Transmembrane helix</keyword>
<evidence type="ECO:0000255" key="1">
    <source>
        <dbReference type="HAMAP-Rule" id="MF_01566"/>
    </source>
</evidence>
<evidence type="ECO:0000256" key="2">
    <source>
        <dbReference type="SAM" id="MobiDB-lite"/>
    </source>
</evidence>
<dbReference type="EMBL" id="CP000305">
    <property type="protein sequence ID" value="ABG17660.1"/>
    <property type="molecule type" value="Genomic_DNA"/>
</dbReference>
<dbReference type="EMBL" id="ACNQ01000008">
    <property type="protein sequence ID" value="EEO77777.1"/>
    <property type="molecule type" value="Genomic_DNA"/>
</dbReference>
<dbReference type="RefSeq" id="WP_002208551.1">
    <property type="nucleotide sequence ID" value="NZ_ACNQ01000008.1"/>
</dbReference>
<dbReference type="SMR" id="Q1CK20"/>
<dbReference type="KEGG" id="ypn:YPN_1330"/>
<dbReference type="HOGENOM" id="CLU_198936_0_0_6"/>
<dbReference type="Proteomes" id="UP000008936">
    <property type="component" value="Chromosome"/>
</dbReference>
<dbReference type="GO" id="GO:0005886">
    <property type="term" value="C:plasma membrane"/>
    <property type="evidence" value="ECO:0007669"/>
    <property type="project" value="UniProtKB-SubCell"/>
</dbReference>
<dbReference type="HAMAP" id="MF_01566">
    <property type="entry name" value="UPF0370"/>
    <property type="match status" value="1"/>
</dbReference>
<dbReference type="InterPro" id="IPR020910">
    <property type="entry name" value="UPF0370"/>
</dbReference>
<dbReference type="NCBIfam" id="NF010185">
    <property type="entry name" value="PRK13664.1"/>
    <property type="match status" value="1"/>
</dbReference>
<dbReference type="Pfam" id="PF13980">
    <property type="entry name" value="UPF0370"/>
    <property type="match status" value="1"/>
</dbReference>
<reference key="1">
    <citation type="journal article" date="2006" name="J. Bacteriol.">
        <title>Complete genome sequence of Yersinia pestis strains Antiqua and Nepal516: evidence of gene reduction in an emerging pathogen.</title>
        <authorList>
            <person name="Chain P.S.G."/>
            <person name="Hu P."/>
            <person name="Malfatti S.A."/>
            <person name="Radnedge L."/>
            <person name="Larimer F."/>
            <person name="Vergez L.M."/>
            <person name="Worsham P."/>
            <person name="Chu M.C."/>
            <person name="Andersen G.L."/>
        </authorList>
    </citation>
    <scope>NUCLEOTIDE SEQUENCE [LARGE SCALE GENOMIC DNA]</scope>
    <source>
        <strain>Nepal516</strain>
    </source>
</reference>
<reference key="2">
    <citation type="submission" date="2009-04" db="EMBL/GenBank/DDBJ databases">
        <title>Yersinia pestis Nepal516A whole genome shotgun sequencing project.</title>
        <authorList>
            <person name="Plunkett G. III"/>
            <person name="Anderson B.D."/>
            <person name="Baumler D.J."/>
            <person name="Burland V."/>
            <person name="Cabot E.L."/>
            <person name="Glasner J.D."/>
            <person name="Mau B."/>
            <person name="Neeno-Eckwall E."/>
            <person name="Perna N.T."/>
            <person name="Munk A.C."/>
            <person name="Tapia R."/>
            <person name="Green L.D."/>
            <person name="Rogers Y.C."/>
            <person name="Detter J.C."/>
            <person name="Bruce D.C."/>
            <person name="Brettin T.S."/>
        </authorList>
    </citation>
    <scope>NUCLEOTIDE SEQUENCE [LARGE SCALE GENOMIC DNA]</scope>
    <source>
        <strain>Nepal516</strain>
    </source>
</reference>
<sequence>MQWLADYWWIILILLVGMILNGIKELRRLDHKRFLDNKPELPPHRDNNAQWDDEDDWPDQNKKK</sequence>
<name>Y1330_YERPN</name>
<organism>
    <name type="scientific">Yersinia pestis bv. Antiqua (strain Nepal516)</name>
    <dbReference type="NCBI Taxonomy" id="377628"/>
    <lineage>
        <taxon>Bacteria</taxon>
        <taxon>Pseudomonadati</taxon>
        <taxon>Pseudomonadota</taxon>
        <taxon>Gammaproteobacteria</taxon>
        <taxon>Enterobacterales</taxon>
        <taxon>Yersiniaceae</taxon>
        <taxon>Yersinia</taxon>
    </lineage>
</organism>
<gene>
    <name type="ordered locus">YPN_1330</name>
    <name type="ORF">YP516_1464</name>
</gene>